<proteinExistence type="inferred from homology"/>
<organism>
    <name type="scientific">Nostoc punctiforme (strain ATCC 29133 / PCC 73102)</name>
    <dbReference type="NCBI Taxonomy" id="63737"/>
    <lineage>
        <taxon>Bacteria</taxon>
        <taxon>Bacillati</taxon>
        <taxon>Cyanobacteriota</taxon>
        <taxon>Cyanophyceae</taxon>
        <taxon>Nostocales</taxon>
        <taxon>Nostocaceae</taxon>
        <taxon>Nostoc</taxon>
    </lineage>
</organism>
<accession>B2ITP5</accession>
<keyword id="KW-1185">Reference proteome</keyword>
<keyword id="KW-0687">Ribonucleoprotein</keyword>
<keyword id="KW-0689">Ribosomal protein</keyword>
<keyword id="KW-0694">RNA-binding</keyword>
<keyword id="KW-0699">rRNA-binding</keyword>
<feature type="chain" id="PRO_1000144304" description="Large ribosomal subunit protein uL14">
    <location>
        <begin position="1"/>
        <end position="122"/>
    </location>
</feature>
<sequence length="122" mass="13345">MIQPQTYLNVADNSGARKLMCIRVLGGGNRRYGFIGDKIIAVVKDATPNMAVKKSDVVEAVIVRTRKAVSRDSGMSIRFDDNAAVIINKDGNPRGTRVFGPVARELRDKNFTKIVSLAPEVL</sequence>
<gene>
    <name evidence="1" type="primary">rplN</name>
    <name evidence="1" type="synonym">rpl14</name>
    <name type="ordered locus">Npun_R4380</name>
</gene>
<name>RL14_NOSP7</name>
<comment type="function">
    <text evidence="1">Binds to 23S rRNA. Forms part of two intersubunit bridges in the 70S ribosome.</text>
</comment>
<comment type="subunit">
    <text evidence="1">Part of the 50S ribosomal subunit. Forms a cluster with proteins L3 and L19. In the 70S ribosome, L14 and L19 interact and together make contacts with the 16S rRNA in bridges B5 and B8.</text>
</comment>
<comment type="similarity">
    <text evidence="1">Belongs to the universal ribosomal protein uL14 family.</text>
</comment>
<dbReference type="EMBL" id="CP001037">
    <property type="protein sequence ID" value="ACC82753.1"/>
    <property type="molecule type" value="Genomic_DNA"/>
</dbReference>
<dbReference type="RefSeq" id="WP_012410715.1">
    <property type="nucleotide sequence ID" value="NC_010628.1"/>
</dbReference>
<dbReference type="SMR" id="B2ITP5"/>
<dbReference type="STRING" id="63737.Npun_R4380"/>
<dbReference type="EnsemblBacteria" id="ACC82753">
    <property type="protein sequence ID" value="ACC82753"/>
    <property type="gene ID" value="Npun_R4380"/>
</dbReference>
<dbReference type="KEGG" id="npu:Npun_R4380"/>
<dbReference type="eggNOG" id="COG0093">
    <property type="taxonomic scope" value="Bacteria"/>
</dbReference>
<dbReference type="HOGENOM" id="CLU_095071_2_1_3"/>
<dbReference type="OrthoDB" id="9806379at2"/>
<dbReference type="PhylomeDB" id="B2ITP5"/>
<dbReference type="Proteomes" id="UP000001191">
    <property type="component" value="Chromosome"/>
</dbReference>
<dbReference type="GO" id="GO:0022625">
    <property type="term" value="C:cytosolic large ribosomal subunit"/>
    <property type="evidence" value="ECO:0007669"/>
    <property type="project" value="TreeGrafter"/>
</dbReference>
<dbReference type="GO" id="GO:0070180">
    <property type="term" value="F:large ribosomal subunit rRNA binding"/>
    <property type="evidence" value="ECO:0007669"/>
    <property type="project" value="TreeGrafter"/>
</dbReference>
<dbReference type="GO" id="GO:0003735">
    <property type="term" value="F:structural constituent of ribosome"/>
    <property type="evidence" value="ECO:0007669"/>
    <property type="project" value="InterPro"/>
</dbReference>
<dbReference type="GO" id="GO:0006412">
    <property type="term" value="P:translation"/>
    <property type="evidence" value="ECO:0007669"/>
    <property type="project" value="UniProtKB-UniRule"/>
</dbReference>
<dbReference type="CDD" id="cd00337">
    <property type="entry name" value="Ribosomal_uL14"/>
    <property type="match status" value="1"/>
</dbReference>
<dbReference type="FunFam" id="2.40.150.20:FF:000001">
    <property type="entry name" value="50S ribosomal protein L14"/>
    <property type="match status" value="1"/>
</dbReference>
<dbReference type="Gene3D" id="2.40.150.20">
    <property type="entry name" value="Ribosomal protein L14"/>
    <property type="match status" value="1"/>
</dbReference>
<dbReference type="HAMAP" id="MF_01367">
    <property type="entry name" value="Ribosomal_uL14"/>
    <property type="match status" value="1"/>
</dbReference>
<dbReference type="InterPro" id="IPR000218">
    <property type="entry name" value="Ribosomal_uL14"/>
</dbReference>
<dbReference type="InterPro" id="IPR005745">
    <property type="entry name" value="Ribosomal_uL14_bac-type"/>
</dbReference>
<dbReference type="InterPro" id="IPR019972">
    <property type="entry name" value="Ribosomal_uL14_CS"/>
</dbReference>
<dbReference type="InterPro" id="IPR036853">
    <property type="entry name" value="Ribosomal_uL14_sf"/>
</dbReference>
<dbReference type="NCBIfam" id="TIGR01067">
    <property type="entry name" value="rplN_bact"/>
    <property type="match status" value="1"/>
</dbReference>
<dbReference type="PANTHER" id="PTHR11761">
    <property type="entry name" value="50S/60S RIBOSOMAL PROTEIN L14/L23"/>
    <property type="match status" value="1"/>
</dbReference>
<dbReference type="PANTHER" id="PTHR11761:SF3">
    <property type="entry name" value="LARGE RIBOSOMAL SUBUNIT PROTEIN UL14M"/>
    <property type="match status" value="1"/>
</dbReference>
<dbReference type="Pfam" id="PF00238">
    <property type="entry name" value="Ribosomal_L14"/>
    <property type="match status" value="1"/>
</dbReference>
<dbReference type="SMART" id="SM01374">
    <property type="entry name" value="Ribosomal_L14"/>
    <property type="match status" value="1"/>
</dbReference>
<dbReference type="SUPFAM" id="SSF50193">
    <property type="entry name" value="Ribosomal protein L14"/>
    <property type="match status" value="1"/>
</dbReference>
<dbReference type="PROSITE" id="PS00049">
    <property type="entry name" value="RIBOSOMAL_L14"/>
    <property type="match status" value="1"/>
</dbReference>
<evidence type="ECO:0000255" key="1">
    <source>
        <dbReference type="HAMAP-Rule" id="MF_01367"/>
    </source>
</evidence>
<evidence type="ECO:0000305" key="2"/>
<reference key="1">
    <citation type="journal article" date="2013" name="Plant Physiol.">
        <title>A Nostoc punctiforme Sugar Transporter Necessary to Establish a Cyanobacterium-Plant Symbiosis.</title>
        <authorList>
            <person name="Ekman M."/>
            <person name="Picossi S."/>
            <person name="Campbell E.L."/>
            <person name="Meeks J.C."/>
            <person name="Flores E."/>
        </authorList>
    </citation>
    <scope>NUCLEOTIDE SEQUENCE [LARGE SCALE GENOMIC DNA]</scope>
    <source>
        <strain>ATCC 29133 / PCC 73102</strain>
    </source>
</reference>
<protein>
    <recommendedName>
        <fullName evidence="1">Large ribosomal subunit protein uL14</fullName>
    </recommendedName>
    <alternativeName>
        <fullName evidence="2">50S ribosomal protein L14</fullName>
    </alternativeName>
</protein>